<dbReference type="EC" id="2.7.11.32" evidence="1"/>
<dbReference type="EC" id="2.7.4.27" evidence="1"/>
<dbReference type="EMBL" id="CP000248">
    <property type="protein sequence ID" value="ABD24566.1"/>
    <property type="molecule type" value="Genomic_DNA"/>
</dbReference>
<dbReference type="RefSeq" id="WP_011443780.1">
    <property type="nucleotide sequence ID" value="NC_007794.1"/>
</dbReference>
<dbReference type="SMR" id="Q2GC57"/>
<dbReference type="STRING" id="279238.Saro_0117"/>
<dbReference type="KEGG" id="nar:Saro_0117"/>
<dbReference type="eggNOG" id="COG1806">
    <property type="taxonomic scope" value="Bacteria"/>
</dbReference>
<dbReference type="HOGENOM" id="CLU_046206_2_0_5"/>
<dbReference type="Proteomes" id="UP000009134">
    <property type="component" value="Chromosome"/>
</dbReference>
<dbReference type="GO" id="GO:0043531">
    <property type="term" value="F:ADP binding"/>
    <property type="evidence" value="ECO:0007669"/>
    <property type="project" value="UniProtKB-UniRule"/>
</dbReference>
<dbReference type="GO" id="GO:0005524">
    <property type="term" value="F:ATP binding"/>
    <property type="evidence" value="ECO:0007669"/>
    <property type="project" value="InterPro"/>
</dbReference>
<dbReference type="GO" id="GO:0016776">
    <property type="term" value="F:phosphotransferase activity, phosphate group as acceptor"/>
    <property type="evidence" value="ECO:0007669"/>
    <property type="project" value="UniProtKB-UniRule"/>
</dbReference>
<dbReference type="GO" id="GO:0004674">
    <property type="term" value="F:protein serine/threonine kinase activity"/>
    <property type="evidence" value="ECO:0007669"/>
    <property type="project" value="UniProtKB-UniRule"/>
</dbReference>
<dbReference type="HAMAP" id="MF_00921">
    <property type="entry name" value="PDRP"/>
    <property type="match status" value="1"/>
</dbReference>
<dbReference type="InterPro" id="IPR005177">
    <property type="entry name" value="Kinase-pyrophosphorylase"/>
</dbReference>
<dbReference type="InterPro" id="IPR026565">
    <property type="entry name" value="PPDK_reg"/>
</dbReference>
<dbReference type="NCBIfam" id="NF003742">
    <property type="entry name" value="PRK05339.1"/>
    <property type="match status" value="1"/>
</dbReference>
<dbReference type="PANTHER" id="PTHR31756">
    <property type="entry name" value="PYRUVATE, PHOSPHATE DIKINASE REGULATORY PROTEIN 1, CHLOROPLASTIC"/>
    <property type="match status" value="1"/>
</dbReference>
<dbReference type="PANTHER" id="PTHR31756:SF3">
    <property type="entry name" value="PYRUVATE, PHOSPHATE DIKINASE REGULATORY PROTEIN 1, CHLOROPLASTIC"/>
    <property type="match status" value="1"/>
</dbReference>
<dbReference type="Pfam" id="PF03618">
    <property type="entry name" value="Kinase-PPPase"/>
    <property type="match status" value="1"/>
</dbReference>
<reference key="1">
    <citation type="submission" date="2006-01" db="EMBL/GenBank/DDBJ databases">
        <title>Complete sequence of Novosphingobium aromaticivorans DSM 12444.</title>
        <authorList>
            <consortium name="US DOE Joint Genome Institute"/>
            <person name="Copeland A."/>
            <person name="Lucas S."/>
            <person name="Lapidus A."/>
            <person name="Barry K."/>
            <person name="Detter J.C."/>
            <person name="Glavina T."/>
            <person name="Hammon N."/>
            <person name="Israni S."/>
            <person name="Pitluck S."/>
            <person name="Chain P."/>
            <person name="Malfatti S."/>
            <person name="Shin M."/>
            <person name="Vergez L."/>
            <person name="Schmutz J."/>
            <person name="Larimer F."/>
            <person name="Land M."/>
            <person name="Kyrpides N."/>
            <person name="Ivanova N."/>
            <person name="Fredrickson J."/>
            <person name="Balkwill D."/>
            <person name="Romine M.F."/>
            <person name="Richardson P."/>
        </authorList>
    </citation>
    <scope>NUCLEOTIDE SEQUENCE [LARGE SCALE GENOMIC DNA]</scope>
    <source>
        <strain>ATCC 700278 / DSM 12444 / CCUG 56034 / CIP 105152 / NBRC 16084 / F199</strain>
    </source>
</reference>
<sequence>MQRLHLHLLSDSTGETLEMIAKAALAQFDGADVVRHFWPMVRSMQHLDRIMGEIAANPGLVLYTLVNAETRERLEQRCAALGLPSVAALDAVTDALQQQLGIQAKGRPGRQHMMDEAYFARVDAIQFTIAHDDGVGWENWEEADIVLAGVSRSSKTPTSIYLANRGYKVANIPIVVESPPPSMLFSLRRPLVVGLTTSPERLIAVRRNRLLSLNQAPETAYVDNEQVTREVQFARRMFADNGWPVIDVSRRSIEETAAAVINLYNERTAAGASGDGVKPI</sequence>
<feature type="chain" id="PRO_0000316708" description="Putative pyruvate, phosphate dikinase regulatory protein">
    <location>
        <begin position="1"/>
        <end position="280"/>
    </location>
</feature>
<feature type="binding site" evidence="1">
    <location>
        <begin position="149"/>
        <end position="156"/>
    </location>
    <ligand>
        <name>ADP</name>
        <dbReference type="ChEBI" id="CHEBI:456216"/>
    </ligand>
</feature>
<protein>
    <recommendedName>
        <fullName evidence="1">Putative pyruvate, phosphate dikinase regulatory protein</fullName>
        <shortName evidence="1">PPDK regulatory protein</shortName>
        <ecNumber evidence="1">2.7.11.32</ecNumber>
        <ecNumber evidence="1">2.7.4.27</ecNumber>
    </recommendedName>
</protein>
<name>PDRP_NOVAD</name>
<accession>Q2GC57</accession>
<organism>
    <name type="scientific">Novosphingobium aromaticivorans (strain ATCC 700278 / DSM 12444 / CCUG 56034 / CIP 105152 / NBRC 16084 / F199)</name>
    <dbReference type="NCBI Taxonomy" id="279238"/>
    <lineage>
        <taxon>Bacteria</taxon>
        <taxon>Pseudomonadati</taxon>
        <taxon>Pseudomonadota</taxon>
        <taxon>Alphaproteobacteria</taxon>
        <taxon>Sphingomonadales</taxon>
        <taxon>Sphingomonadaceae</taxon>
        <taxon>Novosphingobium</taxon>
    </lineage>
</organism>
<gene>
    <name type="ordered locus">Saro_0117</name>
</gene>
<keyword id="KW-0418">Kinase</keyword>
<keyword id="KW-0547">Nucleotide-binding</keyword>
<keyword id="KW-1185">Reference proteome</keyword>
<keyword id="KW-0723">Serine/threonine-protein kinase</keyword>
<keyword id="KW-0808">Transferase</keyword>
<evidence type="ECO:0000255" key="1">
    <source>
        <dbReference type="HAMAP-Rule" id="MF_00921"/>
    </source>
</evidence>
<comment type="function">
    <text evidence="1">Bifunctional serine/threonine kinase and phosphorylase involved in the regulation of the pyruvate, phosphate dikinase (PPDK) by catalyzing its phosphorylation/dephosphorylation.</text>
</comment>
<comment type="catalytic activity">
    <reaction evidence="1">
        <text>N(tele)-phospho-L-histidyl/L-threonyl-[pyruvate, phosphate dikinase] + ADP = N(tele)-phospho-L-histidyl/O-phospho-L-threonyl-[pyruvate, phosphate dikinase] + AMP + H(+)</text>
        <dbReference type="Rhea" id="RHEA:43692"/>
        <dbReference type="Rhea" id="RHEA-COMP:10650"/>
        <dbReference type="Rhea" id="RHEA-COMP:10651"/>
        <dbReference type="ChEBI" id="CHEBI:15378"/>
        <dbReference type="ChEBI" id="CHEBI:30013"/>
        <dbReference type="ChEBI" id="CHEBI:61977"/>
        <dbReference type="ChEBI" id="CHEBI:83586"/>
        <dbReference type="ChEBI" id="CHEBI:456215"/>
        <dbReference type="ChEBI" id="CHEBI:456216"/>
        <dbReference type="EC" id="2.7.11.32"/>
    </reaction>
</comment>
<comment type="catalytic activity">
    <reaction evidence="1">
        <text>N(tele)-phospho-L-histidyl/O-phospho-L-threonyl-[pyruvate, phosphate dikinase] + phosphate + H(+) = N(tele)-phospho-L-histidyl/L-threonyl-[pyruvate, phosphate dikinase] + diphosphate</text>
        <dbReference type="Rhea" id="RHEA:43696"/>
        <dbReference type="Rhea" id="RHEA-COMP:10650"/>
        <dbReference type="Rhea" id="RHEA-COMP:10651"/>
        <dbReference type="ChEBI" id="CHEBI:15378"/>
        <dbReference type="ChEBI" id="CHEBI:30013"/>
        <dbReference type="ChEBI" id="CHEBI:33019"/>
        <dbReference type="ChEBI" id="CHEBI:43474"/>
        <dbReference type="ChEBI" id="CHEBI:61977"/>
        <dbReference type="ChEBI" id="CHEBI:83586"/>
        <dbReference type="EC" id="2.7.4.27"/>
    </reaction>
</comment>
<comment type="similarity">
    <text evidence="1">Belongs to the pyruvate, phosphate/water dikinase regulatory protein family. PDRP subfamily.</text>
</comment>
<proteinExistence type="inferred from homology"/>